<proteinExistence type="evidence at transcript level"/>
<name>CHRD1_MACFA</name>
<keyword id="KW-0007">Acetylation</keyword>
<keyword id="KW-0143">Chaperone</keyword>
<keyword id="KW-0479">Metal-binding</keyword>
<keyword id="KW-0597">Phosphoprotein</keyword>
<keyword id="KW-1185">Reference proteome</keyword>
<keyword id="KW-0677">Repeat</keyword>
<keyword id="KW-0346">Stress response</keyword>
<keyword id="KW-0862">Zinc</keyword>
<reference key="1">
    <citation type="submission" date="2005-06" db="EMBL/GenBank/DDBJ databases">
        <title>DNA sequences of macaque genes expressed in brain or testis and its evolutionary implications.</title>
        <authorList>
            <consortium name="International consortium for macaque cDNA sequencing and analysis"/>
        </authorList>
    </citation>
    <scope>NUCLEOTIDE SEQUENCE [LARGE SCALE MRNA]</scope>
    <source>
        <tissue>Testis</tissue>
    </source>
</reference>
<gene>
    <name type="primary">CHORDC1</name>
    <name type="ORF">QtsA-14386</name>
</gene>
<sequence>MALLCYNRACGQRFDPETNSDDACTYHPGVPVFHDALKGWSCCKRRTTDFSDFLSIVGCTKGRHNSEKPPEPVKPEVKTTEKKELSELKPKFQEHIIQAPKPVEAIKRPSPDEPMTNLELKISASLKQALDKLKLSSGNEEDKKEEDNDEIKIGTSCKNGGCSKTYRGLESLEEVCVYHSGVPIFHEGMKYWSCCRRKTSDFNTFLAQEGCTKGRHMWTKKDAGKKVVPCRHDWHQTGGEVTISVYAKNSLPELSRVEANSTLLNVHIVFEGEKEFDQNVKLWGVIDVKRSYVTMTATKIEINMRKAEPMQWASLELPAAKKQEKQKDDTTD</sequence>
<accession>Q4R7U2</accession>
<comment type="function">
    <text evidence="1 2">Regulates centrosome duplication, probably by inhibiting the kinase activity of ROCK2. Proposed to act as co-chaperone for HSP90. May play a role in the regulation of NOD1 via a HSP90 chaperone complex. In vitro, has intrinsic chaperone activity. This function may be achieved by inhibiting association of ROCK2 with NPM1. Plays a role in ensuring the localization of the tyrosine kinase receptor EGFR to the plasma membrane, and thus ensures the subsequent regulation of EGFR activity and EGF-induced actin cytoskeleton remodeling (By similarity). Involved in stress response. Prevents tumorigenesis (By similarity).</text>
</comment>
<comment type="subunit">
    <text evidence="1">Interacts with HSP90AA1, HSP90AB1, PPP5C, ROCK1 and ROCK2.</text>
</comment>
<evidence type="ECO:0000250" key="1"/>
<evidence type="ECO:0000250" key="2">
    <source>
        <dbReference type="UniProtKB" id="Q9UHD1"/>
    </source>
</evidence>
<evidence type="ECO:0000255" key="3">
    <source>
        <dbReference type="PROSITE-ProRule" id="PRU00547"/>
    </source>
</evidence>
<evidence type="ECO:0000255" key="4">
    <source>
        <dbReference type="PROSITE-ProRule" id="PRU00734"/>
    </source>
</evidence>
<evidence type="ECO:0000256" key="5">
    <source>
        <dbReference type="SAM" id="MobiDB-lite"/>
    </source>
</evidence>
<feature type="initiator methionine" description="Removed" evidence="2">
    <location>
        <position position="1"/>
    </location>
</feature>
<feature type="chain" id="PRO_0000402800" description="Cysteine and histidine-rich domain-containing protein 1">
    <location>
        <begin position="2"/>
        <end position="332"/>
    </location>
</feature>
<feature type="domain" description="CHORD 1" evidence="4">
    <location>
        <begin position="5"/>
        <end position="64"/>
    </location>
</feature>
<feature type="domain" description="CHORD 2" evidence="4">
    <location>
        <begin position="157"/>
        <end position="216"/>
    </location>
</feature>
<feature type="domain" description="CS" evidence="3">
    <location>
        <begin position="227"/>
        <end position="316"/>
    </location>
</feature>
<feature type="region of interest" description="Interaction with PPP5C" evidence="1">
    <location>
        <begin position="2"/>
        <end position="77"/>
    </location>
</feature>
<feature type="region of interest" description="Disordered" evidence="5">
    <location>
        <begin position="62"/>
        <end position="82"/>
    </location>
</feature>
<feature type="region of interest" description="Interaction with HSP90AA1 and HSP90AB1" evidence="1">
    <location>
        <begin position="65"/>
        <end position="316"/>
    </location>
</feature>
<feature type="compositionally biased region" description="Basic and acidic residues" evidence="5">
    <location>
        <begin position="64"/>
        <end position="82"/>
    </location>
</feature>
<feature type="binding site" evidence="4">
    <location>
        <position position="5"/>
    </location>
    <ligand>
        <name>Zn(2+)</name>
        <dbReference type="ChEBI" id="CHEBI:29105"/>
        <label>1</label>
    </ligand>
</feature>
<feature type="binding site" evidence="4">
    <location>
        <position position="10"/>
    </location>
    <ligand>
        <name>Zn(2+)</name>
        <dbReference type="ChEBI" id="CHEBI:29105"/>
        <label>1</label>
    </ligand>
</feature>
<feature type="binding site" evidence="4">
    <location>
        <position position="24"/>
    </location>
    <ligand>
        <name>Zn(2+)</name>
        <dbReference type="ChEBI" id="CHEBI:29105"/>
        <label>1</label>
    </ligand>
</feature>
<feature type="binding site" evidence="4">
    <location>
        <position position="27"/>
    </location>
    <ligand>
        <name>Zn(2+)</name>
        <dbReference type="ChEBI" id="CHEBI:29105"/>
        <label>2</label>
    </ligand>
</feature>
<feature type="binding site" evidence="4">
    <location>
        <position position="42"/>
    </location>
    <ligand>
        <name>Zn(2+)</name>
        <dbReference type="ChEBI" id="CHEBI:29105"/>
        <label>2</label>
    </ligand>
</feature>
<feature type="binding site" evidence="4">
    <location>
        <position position="43"/>
    </location>
    <ligand>
        <name>Zn(2+)</name>
        <dbReference type="ChEBI" id="CHEBI:29105"/>
        <label>2</label>
    </ligand>
</feature>
<feature type="binding site" evidence="4">
    <location>
        <position position="59"/>
    </location>
    <ligand>
        <name>Zn(2+)</name>
        <dbReference type="ChEBI" id="CHEBI:29105"/>
        <label>2</label>
    </ligand>
</feature>
<feature type="binding site" evidence="4">
    <location>
        <position position="64"/>
    </location>
    <ligand>
        <name>Zn(2+)</name>
        <dbReference type="ChEBI" id="CHEBI:29105"/>
        <label>1</label>
    </ligand>
</feature>
<feature type="binding site" evidence="4">
    <location>
        <position position="157"/>
    </location>
    <ligand>
        <name>Zn(2+)</name>
        <dbReference type="ChEBI" id="CHEBI:29105"/>
        <label>3</label>
    </ligand>
</feature>
<feature type="binding site" evidence="4">
    <location>
        <position position="162"/>
    </location>
    <ligand>
        <name>Zn(2+)</name>
        <dbReference type="ChEBI" id="CHEBI:29105"/>
        <label>3</label>
    </ligand>
</feature>
<feature type="binding site" evidence="4">
    <location>
        <position position="176"/>
    </location>
    <ligand>
        <name>Zn(2+)</name>
        <dbReference type="ChEBI" id="CHEBI:29105"/>
        <label>3</label>
    </ligand>
</feature>
<feature type="binding site" evidence="4">
    <location>
        <position position="179"/>
    </location>
    <ligand>
        <name>Zn(2+)</name>
        <dbReference type="ChEBI" id="CHEBI:29105"/>
        <label>4</label>
    </ligand>
</feature>
<feature type="binding site" evidence="4">
    <location>
        <position position="194"/>
    </location>
    <ligand>
        <name>Zn(2+)</name>
        <dbReference type="ChEBI" id="CHEBI:29105"/>
        <label>4</label>
    </ligand>
</feature>
<feature type="binding site" evidence="4">
    <location>
        <position position="195"/>
    </location>
    <ligand>
        <name>Zn(2+)</name>
        <dbReference type="ChEBI" id="CHEBI:29105"/>
        <label>4</label>
    </ligand>
</feature>
<feature type="binding site" evidence="4">
    <location>
        <position position="211"/>
    </location>
    <ligand>
        <name>Zn(2+)</name>
        <dbReference type="ChEBI" id="CHEBI:29105"/>
        <label>4</label>
    </ligand>
</feature>
<feature type="binding site" evidence="4">
    <location>
        <position position="216"/>
    </location>
    <ligand>
        <name>Zn(2+)</name>
        <dbReference type="ChEBI" id="CHEBI:29105"/>
        <label>3</label>
    </ligand>
</feature>
<feature type="modified residue" description="N-acetylalanine" evidence="2">
    <location>
        <position position="2"/>
    </location>
</feature>
<feature type="modified residue" description="Phosphothreonine" evidence="2">
    <location>
        <position position="47"/>
    </location>
</feature>
<feature type="modified residue" description="Phosphoserine" evidence="2">
    <location>
        <position position="51"/>
    </location>
</feature>
<protein>
    <recommendedName>
        <fullName>Cysteine and histidine-rich domain-containing protein 1</fullName>
    </recommendedName>
    <alternativeName>
        <fullName>CHORD domain-containing protein 1</fullName>
        <shortName>CHP-1</shortName>
    </alternativeName>
    <alternativeName>
        <fullName>Morgana</fullName>
    </alternativeName>
</protein>
<organism>
    <name type="scientific">Macaca fascicularis</name>
    <name type="common">Crab-eating macaque</name>
    <name type="synonym">Cynomolgus monkey</name>
    <dbReference type="NCBI Taxonomy" id="9541"/>
    <lineage>
        <taxon>Eukaryota</taxon>
        <taxon>Metazoa</taxon>
        <taxon>Chordata</taxon>
        <taxon>Craniata</taxon>
        <taxon>Vertebrata</taxon>
        <taxon>Euteleostomi</taxon>
        <taxon>Mammalia</taxon>
        <taxon>Eutheria</taxon>
        <taxon>Euarchontoglires</taxon>
        <taxon>Primates</taxon>
        <taxon>Haplorrhini</taxon>
        <taxon>Catarrhini</taxon>
        <taxon>Cercopithecidae</taxon>
        <taxon>Cercopithecinae</taxon>
        <taxon>Macaca</taxon>
    </lineage>
</organism>
<dbReference type="EMBL" id="AB168720">
    <property type="protein sequence ID" value="BAE00830.1"/>
    <property type="molecule type" value="mRNA"/>
</dbReference>
<dbReference type="RefSeq" id="NP_001270158.1">
    <property type="nucleotide sequence ID" value="NM_001283229.1"/>
</dbReference>
<dbReference type="SMR" id="Q4R7U2"/>
<dbReference type="STRING" id="9541.ENSMFAP00000021389"/>
<dbReference type="eggNOG" id="KOG1667">
    <property type="taxonomic scope" value="Eukaryota"/>
</dbReference>
<dbReference type="Proteomes" id="UP000233100">
    <property type="component" value="Unplaced"/>
</dbReference>
<dbReference type="GO" id="GO:0046872">
    <property type="term" value="F:metal ion binding"/>
    <property type="evidence" value="ECO:0007669"/>
    <property type="project" value="UniProtKB-KW"/>
</dbReference>
<dbReference type="GO" id="GO:0061077">
    <property type="term" value="P:chaperone-mediated protein folding"/>
    <property type="evidence" value="ECO:0000250"/>
    <property type="project" value="UniProtKB"/>
</dbReference>
<dbReference type="GO" id="GO:1900034">
    <property type="term" value="P:regulation of cellular response to heat"/>
    <property type="evidence" value="ECO:0000250"/>
    <property type="project" value="UniProtKB"/>
</dbReference>
<dbReference type="GO" id="GO:0010824">
    <property type="term" value="P:regulation of centrosome duplication"/>
    <property type="evidence" value="ECO:0000250"/>
    <property type="project" value="UniProtKB"/>
</dbReference>
<dbReference type="CDD" id="cd06488">
    <property type="entry name" value="p23_melusin_like"/>
    <property type="match status" value="1"/>
</dbReference>
<dbReference type="FunFam" id="2.60.40.790:FF:000017">
    <property type="entry name" value="Cysteine and histidine-rich domain-containing protein 1"/>
    <property type="match status" value="1"/>
</dbReference>
<dbReference type="FunFam" id="4.10.1130.20:FF:000001">
    <property type="entry name" value="Cysteine and histidine-rich domain-containing protein 1"/>
    <property type="match status" value="1"/>
</dbReference>
<dbReference type="FunFam" id="4.10.1130.20:FF:000002">
    <property type="entry name" value="cysteine and histidine-rich domain-containing protein 1"/>
    <property type="match status" value="1"/>
</dbReference>
<dbReference type="Gene3D" id="2.60.40.790">
    <property type="match status" value="1"/>
</dbReference>
<dbReference type="Gene3D" id="4.10.1130.20">
    <property type="match status" value="2"/>
</dbReference>
<dbReference type="InterPro" id="IPR007051">
    <property type="entry name" value="CHORD_dom"/>
</dbReference>
<dbReference type="InterPro" id="IPR039790">
    <property type="entry name" value="CHRD1"/>
</dbReference>
<dbReference type="InterPro" id="IPR007052">
    <property type="entry name" value="CS_dom"/>
</dbReference>
<dbReference type="InterPro" id="IPR008978">
    <property type="entry name" value="HSP20-like_chaperone"/>
</dbReference>
<dbReference type="PANTHER" id="PTHR46983">
    <property type="entry name" value="CYSTEINE AND HISTIDINE-RICH DOMAIN-CONTAINING PROTEIN 1"/>
    <property type="match status" value="1"/>
</dbReference>
<dbReference type="PANTHER" id="PTHR46983:SF4">
    <property type="entry name" value="CYSTEINE AND HISTIDINE-RICH DOMAIN-CONTAINING PROTEIN 1"/>
    <property type="match status" value="1"/>
</dbReference>
<dbReference type="Pfam" id="PF04968">
    <property type="entry name" value="CHORD"/>
    <property type="match status" value="2"/>
</dbReference>
<dbReference type="Pfam" id="PF04969">
    <property type="entry name" value="CS"/>
    <property type="match status" value="1"/>
</dbReference>
<dbReference type="SUPFAM" id="SSF49764">
    <property type="entry name" value="HSP20-like chaperones"/>
    <property type="match status" value="1"/>
</dbReference>
<dbReference type="PROSITE" id="PS51401">
    <property type="entry name" value="CHORD"/>
    <property type="match status" value="2"/>
</dbReference>
<dbReference type="PROSITE" id="PS51203">
    <property type="entry name" value="CS"/>
    <property type="match status" value="1"/>
</dbReference>